<dbReference type="EC" id="7.1.1.-" evidence="1"/>
<dbReference type="EMBL" id="AM408590">
    <property type="protein sequence ID" value="CAL73165.1"/>
    <property type="molecule type" value="Genomic_DNA"/>
</dbReference>
<dbReference type="RefSeq" id="WP_003416447.1">
    <property type="nucleotide sequence ID" value="NC_008769.1"/>
</dbReference>
<dbReference type="SMR" id="A1KNE9"/>
<dbReference type="KEGG" id="mbb:BCG_3176"/>
<dbReference type="HOGENOM" id="CLU_067218_4_0_11"/>
<dbReference type="Proteomes" id="UP000001472">
    <property type="component" value="Chromosome"/>
</dbReference>
<dbReference type="GO" id="GO:0005886">
    <property type="term" value="C:plasma membrane"/>
    <property type="evidence" value="ECO:0007669"/>
    <property type="project" value="UniProtKB-SubCell"/>
</dbReference>
<dbReference type="GO" id="GO:0051539">
    <property type="term" value="F:4 iron, 4 sulfur cluster binding"/>
    <property type="evidence" value="ECO:0007669"/>
    <property type="project" value="UniProtKB-KW"/>
</dbReference>
<dbReference type="GO" id="GO:0005506">
    <property type="term" value="F:iron ion binding"/>
    <property type="evidence" value="ECO:0007669"/>
    <property type="project" value="UniProtKB-UniRule"/>
</dbReference>
<dbReference type="GO" id="GO:0050136">
    <property type="term" value="F:NADH:ubiquinone reductase (non-electrogenic) activity"/>
    <property type="evidence" value="ECO:0007669"/>
    <property type="project" value="UniProtKB-UniRule"/>
</dbReference>
<dbReference type="GO" id="GO:0048038">
    <property type="term" value="F:quinone binding"/>
    <property type="evidence" value="ECO:0007669"/>
    <property type="project" value="UniProtKB-KW"/>
</dbReference>
<dbReference type="GO" id="GO:0009060">
    <property type="term" value="P:aerobic respiration"/>
    <property type="evidence" value="ECO:0007669"/>
    <property type="project" value="TreeGrafter"/>
</dbReference>
<dbReference type="FunFam" id="3.30.70.3270:FF:000007">
    <property type="entry name" value="NADH-quinone oxidoreductase subunit I"/>
    <property type="match status" value="1"/>
</dbReference>
<dbReference type="Gene3D" id="3.30.70.3270">
    <property type="match status" value="1"/>
</dbReference>
<dbReference type="HAMAP" id="MF_01351">
    <property type="entry name" value="NDH1_NuoI"/>
    <property type="match status" value="1"/>
</dbReference>
<dbReference type="InterPro" id="IPR017896">
    <property type="entry name" value="4Fe4S_Fe-S-bd"/>
</dbReference>
<dbReference type="InterPro" id="IPR017900">
    <property type="entry name" value="4Fe4S_Fe_S_CS"/>
</dbReference>
<dbReference type="InterPro" id="IPR010226">
    <property type="entry name" value="NADH_quinone_OxRdtase_chainI"/>
</dbReference>
<dbReference type="NCBIfam" id="TIGR01971">
    <property type="entry name" value="NuoI"/>
    <property type="match status" value="1"/>
</dbReference>
<dbReference type="NCBIfam" id="NF004537">
    <property type="entry name" value="PRK05888.1-3"/>
    <property type="match status" value="1"/>
</dbReference>
<dbReference type="PANTHER" id="PTHR10849:SF20">
    <property type="entry name" value="NADH DEHYDROGENASE [UBIQUINONE] IRON-SULFUR PROTEIN 8, MITOCHONDRIAL"/>
    <property type="match status" value="1"/>
</dbReference>
<dbReference type="PANTHER" id="PTHR10849">
    <property type="entry name" value="NADH DEHYDROGENASE UBIQUINONE IRON-SULFUR PROTEIN 8, MITOCHONDRIAL"/>
    <property type="match status" value="1"/>
</dbReference>
<dbReference type="Pfam" id="PF12838">
    <property type="entry name" value="Fer4_7"/>
    <property type="match status" value="1"/>
</dbReference>
<dbReference type="SUPFAM" id="SSF54862">
    <property type="entry name" value="4Fe-4S ferredoxins"/>
    <property type="match status" value="1"/>
</dbReference>
<dbReference type="PROSITE" id="PS00198">
    <property type="entry name" value="4FE4S_FER_1"/>
    <property type="match status" value="2"/>
</dbReference>
<dbReference type="PROSITE" id="PS51379">
    <property type="entry name" value="4FE4S_FER_2"/>
    <property type="match status" value="2"/>
</dbReference>
<comment type="function">
    <text evidence="1">NDH-1 shuttles electrons from NADH, via FMN and iron-sulfur (Fe-S) centers, to quinones in the respiratory chain. The immediate electron acceptor for the enzyme in this species is believed to be menaquinone. Couples the redox reaction to proton translocation (for every two electrons transferred, four hydrogen ions are translocated across the cytoplasmic membrane), and thus conserves the redox energy in a proton gradient.</text>
</comment>
<comment type="catalytic activity">
    <reaction evidence="1">
        <text>a quinone + NADH + 5 H(+)(in) = a quinol + NAD(+) + 4 H(+)(out)</text>
        <dbReference type="Rhea" id="RHEA:57888"/>
        <dbReference type="ChEBI" id="CHEBI:15378"/>
        <dbReference type="ChEBI" id="CHEBI:24646"/>
        <dbReference type="ChEBI" id="CHEBI:57540"/>
        <dbReference type="ChEBI" id="CHEBI:57945"/>
        <dbReference type="ChEBI" id="CHEBI:132124"/>
    </reaction>
</comment>
<comment type="cofactor">
    <cofactor evidence="1">
        <name>[4Fe-4S] cluster</name>
        <dbReference type="ChEBI" id="CHEBI:49883"/>
    </cofactor>
    <text evidence="1">Binds 2 [4Fe-4S] clusters per subunit.</text>
</comment>
<comment type="subunit">
    <text evidence="1">NDH-1 is composed of 14 different subunits. Subunits NuoA, H, J, K, L, M, N constitute the membrane sector of the complex.</text>
</comment>
<comment type="subcellular location">
    <subcellularLocation>
        <location evidence="1">Cell membrane</location>
        <topology evidence="1">Peripheral membrane protein</topology>
    </subcellularLocation>
</comment>
<comment type="similarity">
    <text evidence="1">Belongs to the complex I 23 kDa subunit family.</text>
</comment>
<keyword id="KW-0004">4Fe-4S</keyword>
<keyword id="KW-1003">Cell membrane</keyword>
<keyword id="KW-0408">Iron</keyword>
<keyword id="KW-0411">Iron-sulfur</keyword>
<keyword id="KW-0472">Membrane</keyword>
<keyword id="KW-0479">Metal-binding</keyword>
<keyword id="KW-0520">NAD</keyword>
<keyword id="KW-0874">Quinone</keyword>
<keyword id="KW-0677">Repeat</keyword>
<keyword id="KW-1278">Translocase</keyword>
<evidence type="ECO:0000255" key="1">
    <source>
        <dbReference type="HAMAP-Rule" id="MF_01351"/>
    </source>
</evidence>
<evidence type="ECO:0000256" key="2">
    <source>
        <dbReference type="SAM" id="MobiDB-lite"/>
    </source>
</evidence>
<feature type="chain" id="PRO_0000298513" description="NADH-quinone oxidoreductase subunit I">
    <location>
        <begin position="1"/>
        <end position="211"/>
    </location>
</feature>
<feature type="domain" description="4Fe-4S ferredoxin-type 1" evidence="1">
    <location>
        <begin position="71"/>
        <end position="101"/>
    </location>
</feature>
<feature type="domain" description="4Fe-4S ferredoxin-type 2" evidence="1">
    <location>
        <begin position="117"/>
        <end position="146"/>
    </location>
</feature>
<feature type="region of interest" description="Disordered" evidence="2">
    <location>
        <begin position="1"/>
        <end position="27"/>
    </location>
</feature>
<feature type="binding site" evidence="1">
    <location>
        <position position="81"/>
    </location>
    <ligand>
        <name>[4Fe-4S] cluster</name>
        <dbReference type="ChEBI" id="CHEBI:49883"/>
        <label>1</label>
    </ligand>
</feature>
<feature type="binding site" evidence="1">
    <location>
        <position position="84"/>
    </location>
    <ligand>
        <name>[4Fe-4S] cluster</name>
        <dbReference type="ChEBI" id="CHEBI:49883"/>
        <label>1</label>
    </ligand>
</feature>
<feature type="binding site" evidence="1">
    <location>
        <position position="87"/>
    </location>
    <ligand>
        <name>[4Fe-4S] cluster</name>
        <dbReference type="ChEBI" id="CHEBI:49883"/>
        <label>1</label>
    </ligand>
</feature>
<feature type="binding site" evidence="1">
    <location>
        <position position="91"/>
    </location>
    <ligand>
        <name>[4Fe-4S] cluster</name>
        <dbReference type="ChEBI" id="CHEBI:49883"/>
        <label>2</label>
    </ligand>
</feature>
<feature type="binding site" evidence="1">
    <location>
        <position position="126"/>
    </location>
    <ligand>
        <name>[4Fe-4S] cluster</name>
        <dbReference type="ChEBI" id="CHEBI:49883"/>
        <label>2</label>
    </ligand>
</feature>
<feature type="binding site" evidence="1">
    <location>
        <position position="129"/>
    </location>
    <ligand>
        <name>[4Fe-4S] cluster</name>
        <dbReference type="ChEBI" id="CHEBI:49883"/>
        <label>2</label>
    </ligand>
</feature>
<feature type="binding site" evidence="1">
    <location>
        <position position="132"/>
    </location>
    <ligand>
        <name>[4Fe-4S] cluster</name>
        <dbReference type="ChEBI" id="CHEBI:49883"/>
        <label>2</label>
    </ligand>
</feature>
<feature type="binding site" evidence="1">
    <location>
        <position position="136"/>
    </location>
    <ligand>
        <name>[4Fe-4S] cluster</name>
        <dbReference type="ChEBI" id="CHEBI:49883"/>
        <label>1</label>
    </ligand>
</feature>
<gene>
    <name evidence="1" type="primary">nuoI</name>
    <name type="ordered locus">BCG_3176</name>
</gene>
<protein>
    <recommendedName>
        <fullName evidence="1">NADH-quinone oxidoreductase subunit I</fullName>
        <ecNumber evidence="1">7.1.1.-</ecNumber>
    </recommendedName>
    <alternativeName>
        <fullName evidence="1">NADH dehydrogenase I subunit I</fullName>
    </alternativeName>
    <alternativeName>
        <fullName evidence="1">NDH-1 subunit I</fullName>
    </alternativeName>
</protein>
<accession>A1KNE9</accession>
<organism>
    <name type="scientific">Mycobacterium bovis (strain BCG / Pasteur 1173P2)</name>
    <dbReference type="NCBI Taxonomy" id="410289"/>
    <lineage>
        <taxon>Bacteria</taxon>
        <taxon>Bacillati</taxon>
        <taxon>Actinomycetota</taxon>
        <taxon>Actinomycetes</taxon>
        <taxon>Mycobacteriales</taxon>
        <taxon>Mycobacteriaceae</taxon>
        <taxon>Mycobacterium</taxon>
        <taxon>Mycobacterium tuberculosis complex</taxon>
    </lineage>
</organism>
<proteinExistence type="inferred from homology"/>
<name>NUOI_MYCBP</name>
<reference key="1">
    <citation type="journal article" date="2007" name="Proc. Natl. Acad. Sci. U.S.A.">
        <title>Genome plasticity of BCG and impact on vaccine efficacy.</title>
        <authorList>
            <person name="Brosch R."/>
            <person name="Gordon S.V."/>
            <person name="Garnier T."/>
            <person name="Eiglmeier K."/>
            <person name="Frigui W."/>
            <person name="Valenti P."/>
            <person name="Dos Santos S."/>
            <person name="Duthoy S."/>
            <person name="Lacroix C."/>
            <person name="Garcia-Pelayo C."/>
            <person name="Inwald J.K."/>
            <person name="Golby P."/>
            <person name="Garcia J.N."/>
            <person name="Hewinson R.G."/>
            <person name="Behr M.A."/>
            <person name="Quail M.A."/>
            <person name="Churcher C."/>
            <person name="Barrell B.G."/>
            <person name="Parkhill J."/>
            <person name="Cole S.T."/>
        </authorList>
    </citation>
    <scope>NUCLEOTIDE SEQUENCE [LARGE SCALE GENOMIC DNA]</scope>
    <source>
        <strain>BCG / Pasteur 1173P2</strain>
    </source>
</reference>
<sequence length="211" mass="23436">MANTDRPALPHKRAVPPSRADSGPRRRRTKLLDAVAGFGVTLGSMFKKTVTEEYPERPGPVAARYHGRHQLNRYPDGLEKCIGCELCAWACPADAIYVEGADNTEEERFSPGERYGRVYQINYLRCIGCGLCIEACPTRALTMTYDYELADDNRADLIYEKDRLLAPLLPEMAAPPHPRAPGATDKDYYLGNVTAEGLRGVRESQTTGDSR</sequence>